<evidence type="ECO:0000250" key="1"/>
<evidence type="ECO:0000250" key="2">
    <source>
        <dbReference type="UniProtKB" id="G5E861"/>
    </source>
</evidence>
<evidence type="ECO:0000250" key="3">
    <source>
        <dbReference type="UniProtKB" id="Q96NL6"/>
    </source>
</evidence>
<evidence type="ECO:0000255" key="4"/>
<evidence type="ECO:0000269" key="5">
    <source>
    </source>
</evidence>
<evidence type="ECO:0000303" key="6">
    <source>
    </source>
</evidence>
<proteinExistence type="evidence at protein level"/>
<sequence>MATEIDLLRDQNVKLNDILRQHQIEHIFRDPAMQNSMSKGGRGDTLTNSVNDQSALPPLIAEYEKHLEELNRQLTYYQKHMGEMKLQLETVITENERLHSKLKDAVEKQLEALPFGTGIGNDICADDETVRNLQEQLQIANQEKNWAVQLWQTASQELESVQKLYQEHMTEAQIHVFENRKQKDQLNNFQQLTKKLHVANENIEMTNHHFLKTVTEQNMEIEKLRKQLRQAKLDLRVAVTKVEELTKVTEGLQEQMLKKEEDIMSAQGKEEASDRRVQQLQSSIKQLESRLCIAIQEANVLKTGKTQLEKQIKELQAKCSESENEKYEAISRARDSMQLLEEANIKQNQILLEEKQKEVEREKMKKTISHLIQDAAIKARKEVESTKKQYEVLILQLKEELSALQMDCDEKQGQIDRAIRGKRAVEEELEKIYREGKQDEGDYRKLEEMHQRCLAAERSKDDLQLRLKTAENRIKQLEINSSEEISRSHEMIQKLQTVLESERENCGFVSEQRLKLQQENEQLQKETEDLRKVALEAQKKAKLKVSTMEHQFSIKEHGFEVQLREMEDSNRNSIVELRHLLAAQQKTANRWKEETKKLTESAEMRISSLKSELSRQKLHTQELLSQLEMANEKVAENEKLILEHQEKANRLQRRLSQAEERAASASQQLSVITVQRRKAASMMNLENI</sequence>
<gene>
    <name type="primary">Sclt1</name>
    <name type="synonym">Sap1</name>
</gene>
<protein>
    <recommendedName>
        <fullName>Sodium channel and clathrin linker 1</fullName>
    </recommendedName>
    <alternativeName>
        <fullName>Clathrin-associated protein 1A</fullName>
        <shortName>CAP-1A</shortName>
    </alternativeName>
    <alternativeName>
        <fullName>Sodium channel Nav1.8-binding protein</fullName>
    </alternativeName>
    <alternativeName>
        <fullName>Sodium channel-associated protein 1</fullName>
    </alternativeName>
</protein>
<feature type="initiator methionine" description="Removed" evidence="3">
    <location>
        <position position="1"/>
    </location>
</feature>
<feature type="chain" id="PRO_0000317128" description="Sodium channel and clathrin linker 1">
    <location>
        <begin position="2"/>
        <end position="688"/>
    </location>
</feature>
<feature type="coiled-coil region" evidence="4">
    <location>
        <begin position="59"/>
        <end position="673"/>
    </location>
</feature>
<feature type="modified residue" description="N-acetylalanine" evidence="3">
    <location>
        <position position="2"/>
    </location>
</feature>
<feature type="modified residue" description="Phosphoserine" evidence="2">
    <location>
        <position position="681"/>
    </location>
</feature>
<feature type="splice variant" id="VSP_030908" description="In isoform 2." evidence="6">
    <original>MATEIDLLRDQNVKLNDILRQHQIEHIFRDPAMQN</original>
    <variation>MIFLGSIKSNIFSETQLC</variation>
    <location>
        <begin position="1"/>
        <end position="35"/>
    </location>
</feature>
<dbReference type="EMBL" id="AF421190">
    <property type="protein sequence ID" value="AAN32724.1"/>
    <property type="molecule type" value="mRNA"/>
</dbReference>
<dbReference type="EMBL" id="AF421191">
    <property type="protein sequence ID" value="AAN32725.1"/>
    <property type="molecule type" value="mRNA"/>
</dbReference>
<dbReference type="EMBL" id="AF427094">
    <property type="protein sequence ID" value="AAN63528.1"/>
    <property type="molecule type" value="mRNA"/>
</dbReference>
<dbReference type="EMBL" id="AF427095">
    <property type="protein sequence ID" value="AAN63529.1"/>
    <property type="molecule type" value="mRNA"/>
</dbReference>
<dbReference type="RefSeq" id="NP_714962.1">
    <molecule id="Q8CJ99-1"/>
    <property type="nucleotide sequence ID" value="NM_153740.1"/>
</dbReference>
<dbReference type="SMR" id="Q8CJ99"/>
<dbReference type="CORUM" id="Q8CJ99"/>
<dbReference type="FunCoup" id="Q8CJ99">
    <property type="interactions" value="3620"/>
</dbReference>
<dbReference type="STRING" id="10116.ENSRNOP00000019256"/>
<dbReference type="CarbonylDB" id="Q8CJ99"/>
<dbReference type="iPTMnet" id="Q8CJ99"/>
<dbReference type="PhosphoSitePlus" id="Q8CJ99"/>
<dbReference type="PaxDb" id="10116-ENSRNOP00000019256"/>
<dbReference type="Ensembl" id="ENSRNOT00000019256.7">
    <molecule id="Q8CJ99-1"/>
    <property type="protein sequence ID" value="ENSRNOP00000019256.4"/>
    <property type="gene ID" value="ENSRNOG00000014139.7"/>
</dbReference>
<dbReference type="GeneID" id="266809"/>
<dbReference type="KEGG" id="rno:266809"/>
<dbReference type="UCSC" id="RGD:628721">
    <molecule id="Q8CJ99-1"/>
    <property type="organism name" value="rat"/>
</dbReference>
<dbReference type="AGR" id="RGD:628721"/>
<dbReference type="CTD" id="132320"/>
<dbReference type="RGD" id="628721">
    <property type="gene designation" value="Sclt1"/>
</dbReference>
<dbReference type="eggNOG" id="ENOG502QS6B">
    <property type="taxonomic scope" value="Eukaryota"/>
</dbReference>
<dbReference type="GeneTree" id="ENSGT00730000111168"/>
<dbReference type="HOGENOM" id="CLU_025503_0_0_1"/>
<dbReference type="InParanoid" id="Q8CJ99"/>
<dbReference type="OMA" id="RIHLEEC"/>
<dbReference type="OrthoDB" id="551053at2759"/>
<dbReference type="PhylomeDB" id="Q8CJ99"/>
<dbReference type="TreeFam" id="TF331372"/>
<dbReference type="Reactome" id="R-RNO-5620912">
    <property type="pathway name" value="Anchoring of the basal body to the plasma membrane"/>
</dbReference>
<dbReference type="PRO" id="PR:Q8CJ99"/>
<dbReference type="Proteomes" id="UP000002494">
    <property type="component" value="Chromosome 2"/>
</dbReference>
<dbReference type="Bgee" id="ENSRNOG00000014139">
    <property type="expression patterns" value="Expressed in testis and 19 other cell types or tissues"/>
</dbReference>
<dbReference type="GO" id="GO:0005814">
    <property type="term" value="C:centriole"/>
    <property type="evidence" value="ECO:0000250"/>
    <property type="project" value="UniProtKB"/>
</dbReference>
<dbReference type="GO" id="GO:0005813">
    <property type="term" value="C:centrosome"/>
    <property type="evidence" value="ECO:0000266"/>
    <property type="project" value="RGD"/>
</dbReference>
<dbReference type="GO" id="GO:0036064">
    <property type="term" value="C:ciliary basal body"/>
    <property type="evidence" value="ECO:0007669"/>
    <property type="project" value="Ensembl"/>
</dbReference>
<dbReference type="GO" id="GO:0097539">
    <property type="term" value="C:ciliary transition fiber"/>
    <property type="evidence" value="ECO:0000266"/>
    <property type="project" value="RGD"/>
</dbReference>
<dbReference type="GO" id="GO:0071439">
    <property type="term" value="C:clathrin complex"/>
    <property type="evidence" value="ECO:0000314"/>
    <property type="project" value="RGD"/>
</dbReference>
<dbReference type="GO" id="GO:0005829">
    <property type="term" value="C:cytosol"/>
    <property type="evidence" value="ECO:0007669"/>
    <property type="project" value="Ensembl"/>
</dbReference>
<dbReference type="GO" id="GO:0030276">
    <property type="term" value="F:clathrin binding"/>
    <property type="evidence" value="ECO:0000314"/>
    <property type="project" value="RGD"/>
</dbReference>
<dbReference type="GO" id="GO:0017080">
    <property type="term" value="F:sodium channel regulator activity"/>
    <property type="evidence" value="ECO:0000315"/>
    <property type="project" value="RGD"/>
</dbReference>
<dbReference type="GO" id="GO:0060271">
    <property type="term" value="P:cilium assembly"/>
    <property type="evidence" value="ECO:0000250"/>
    <property type="project" value="UniProtKB"/>
</dbReference>
<dbReference type="GO" id="GO:0045162">
    <property type="term" value="P:clustering of voltage-gated sodium channels"/>
    <property type="evidence" value="ECO:0000315"/>
    <property type="project" value="RGD"/>
</dbReference>
<dbReference type="InterPro" id="IPR038911">
    <property type="entry name" value="SCLT1"/>
</dbReference>
<dbReference type="PANTHER" id="PTHR35970">
    <property type="entry name" value="SODIUM CHANNEL AND CLATHRIN LINKER 1"/>
    <property type="match status" value="1"/>
</dbReference>
<dbReference type="PANTHER" id="PTHR35970:SF1">
    <property type="entry name" value="SODIUM CHANNEL AND CLATHRIN LINKER 1"/>
    <property type="match status" value="1"/>
</dbReference>
<accession>Q8CJ99</accession>
<accession>Q8CJ83</accession>
<accession>Q8CJ84</accession>
<accession>Q8CJ98</accession>
<reference key="1">
    <citation type="journal article" date="2005" name="Mol. Cell. Neurosci.">
        <title>CAP-1A is a novel linker that binds clathrin and the voltage-gated sodium channel Na(v)1.8.</title>
        <authorList>
            <person name="Liu C."/>
            <person name="Cummins T.R."/>
            <person name="Tyrrell L."/>
            <person name="Black J.A."/>
            <person name="Waxman S.G."/>
            <person name="Dib-Hajj S.D."/>
        </authorList>
    </citation>
    <scope>NUCLEOTIDE SEQUENCE [MRNA] (ISOFORMS 1 AND 2)</scope>
    <scope>FUNCTION</scope>
    <scope>INTERACTION WITH CLATHRIN AND SCN10A</scope>
    <scope>IDENTIFICATION IN A COMPLEX WITH CLATHRIN AND SCN10A</scope>
    <scope>TISSUE SPECIFICITY</scope>
</reference>
<comment type="function">
    <text evidence="5">Adapter protein that links SCN10A to clathrin. Regulates SCN10A channel activity, possibly by promoting channel internalization.</text>
</comment>
<comment type="subunit">
    <text evidence="5">Interacts with SCN10A and clathrin. Identified in a complex containing SCN10A, clathrin and SCLT1.</text>
</comment>
<comment type="subcellular location">
    <subcellularLocation>
        <location evidence="1">Cytoplasm</location>
        <location evidence="1">Cytoskeleton</location>
        <location evidence="1">Microtubule organizing center</location>
        <location evidence="1">Centrosome</location>
        <location evidence="1">Centriole</location>
    </subcellularLocation>
    <text evidence="1">Localizes to the distal appendage region of the centriole, which anchors the mother centriole to the plasma membrane.</text>
</comment>
<comment type="alternative products">
    <event type="alternative splicing"/>
    <isoform>
        <id>Q8CJ99-1</id>
        <name>1</name>
        <name>SAP1A</name>
        <sequence type="displayed"/>
    </isoform>
    <isoform>
        <id>Q8CJ99-2</id>
        <name>2</name>
        <name>SAP1B</name>
        <sequence type="described" ref="VSP_030908"/>
    </isoform>
</comment>
<comment type="tissue specificity">
    <text evidence="5">Detected in small neurons in dorsal root ganglia. Detected in C-type fibers of sciatic nerve (at protein level).</text>
</comment>
<organism>
    <name type="scientific">Rattus norvegicus</name>
    <name type="common">Rat</name>
    <dbReference type="NCBI Taxonomy" id="10116"/>
    <lineage>
        <taxon>Eukaryota</taxon>
        <taxon>Metazoa</taxon>
        <taxon>Chordata</taxon>
        <taxon>Craniata</taxon>
        <taxon>Vertebrata</taxon>
        <taxon>Euteleostomi</taxon>
        <taxon>Mammalia</taxon>
        <taxon>Eutheria</taxon>
        <taxon>Euarchontoglires</taxon>
        <taxon>Glires</taxon>
        <taxon>Rodentia</taxon>
        <taxon>Myomorpha</taxon>
        <taxon>Muroidea</taxon>
        <taxon>Muridae</taxon>
        <taxon>Murinae</taxon>
        <taxon>Rattus</taxon>
    </lineage>
</organism>
<name>SCLT1_RAT</name>
<keyword id="KW-0007">Acetylation</keyword>
<keyword id="KW-0025">Alternative splicing</keyword>
<keyword id="KW-0175">Coiled coil</keyword>
<keyword id="KW-0963">Cytoplasm</keyword>
<keyword id="KW-0206">Cytoskeleton</keyword>
<keyword id="KW-0597">Phosphoprotein</keyword>
<keyword id="KW-1185">Reference proteome</keyword>